<sequence length="225" mass="25031">MKKNVQIKGTKDGISIFLSDKASISELQQELTQLLADQKQNPYSGEKLEVQVQIGNRLFSEEEEREISTIIHENSQMKISAFYSNVMSKDEAKKWKENDQIFSMATIIRSGQVVQVPGDFLLIGDVNPGGQIRSNGNVFVLGNIKGIIHAGFEGNGNAIVAGKFLYPSQVRIADKVYGFDSEDYKEVTETDLFSAFVNDAGEIVIDGIHKIRKIRPEISNFQGGR</sequence>
<gene>
    <name evidence="1" type="primary">minC</name>
    <name type="ordered locus">LMOf2365_1564</name>
</gene>
<keyword id="KW-0131">Cell cycle</keyword>
<keyword id="KW-0132">Cell division</keyword>
<keyword id="KW-0717">Septation</keyword>
<protein>
    <recommendedName>
        <fullName evidence="1">Probable septum site-determining protein MinC</fullName>
    </recommendedName>
</protein>
<feature type="chain" id="PRO_0000189041" description="Probable septum site-determining protein MinC">
    <location>
        <begin position="1"/>
        <end position="225"/>
    </location>
</feature>
<dbReference type="EMBL" id="AE017262">
    <property type="protein sequence ID" value="AAT04339.1"/>
    <property type="molecule type" value="Genomic_DNA"/>
</dbReference>
<dbReference type="RefSeq" id="WP_003725673.1">
    <property type="nucleotide sequence ID" value="NC_002973.6"/>
</dbReference>
<dbReference type="SMR" id="Q71ZC5"/>
<dbReference type="KEGG" id="lmf:LMOf2365_1564"/>
<dbReference type="HOGENOM" id="CLU_048711_1_1_9"/>
<dbReference type="GO" id="GO:0000902">
    <property type="term" value="P:cell morphogenesis"/>
    <property type="evidence" value="ECO:0007669"/>
    <property type="project" value="InterPro"/>
</dbReference>
<dbReference type="GO" id="GO:0000917">
    <property type="term" value="P:division septum assembly"/>
    <property type="evidence" value="ECO:0007669"/>
    <property type="project" value="UniProtKB-KW"/>
</dbReference>
<dbReference type="GO" id="GO:1901891">
    <property type="term" value="P:regulation of cell septum assembly"/>
    <property type="evidence" value="ECO:0007669"/>
    <property type="project" value="InterPro"/>
</dbReference>
<dbReference type="FunFam" id="2.160.20.70:FF:000013">
    <property type="entry name" value="Probable septum site-determining protein MinC"/>
    <property type="match status" value="1"/>
</dbReference>
<dbReference type="FunFam" id="3.30.160.540:FF:000002">
    <property type="entry name" value="Probable septum site-determining protein MinC"/>
    <property type="match status" value="1"/>
</dbReference>
<dbReference type="Gene3D" id="2.160.20.70">
    <property type="match status" value="1"/>
</dbReference>
<dbReference type="Gene3D" id="3.30.160.540">
    <property type="match status" value="1"/>
</dbReference>
<dbReference type="HAMAP" id="MF_00267">
    <property type="entry name" value="MinC"/>
    <property type="match status" value="1"/>
</dbReference>
<dbReference type="InterPro" id="IPR016098">
    <property type="entry name" value="CAP/MinC_C"/>
</dbReference>
<dbReference type="InterPro" id="IPR013033">
    <property type="entry name" value="MinC"/>
</dbReference>
<dbReference type="InterPro" id="IPR036145">
    <property type="entry name" value="MinC_C_sf"/>
</dbReference>
<dbReference type="InterPro" id="IPR055219">
    <property type="entry name" value="MinC_N_1"/>
</dbReference>
<dbReference type="InterPro" id="IPR005526">
    <property type="entry name" value="Septum_form_inhib_MinC_C"/>
</dbReference>
<dbReference type="NCBIfam" id="NF001772">
    <property type="entry name" value="PRK00513.1-3"/>
    <property type="match status" value="1"/>
</dbReference>
<dbReference type="PANTHER" id="PTHR34108">
    <property type="entry name" value="SEPTUM SITE-DETERMINING PROTEIN MINC"/>
    <property type="match status" value="1"/>
</dbReference>
<dbReference type="PANTHER" id="PTHR34108:SF1">
    <property type="entry name" value="SEPTUM SITE-DETERMINING PROTEIN MINC"/>
    <property type="match status" value="1"/>
</dbReference>
<dbReference type="Pfam" id="PF03775">
    <property type="entry name" value="MinC_C"/>
    <property type="match status" value="1"/>
</dbReference>
<dbReference type="Pfam" id="PF22642">
    <property type="entry name" value="MinC_N_1"/>
    <property type="match status" value="1"/>
</dbReference>
<dbReference type="SUPFAM" id="SSF63848">
    <property type="entry name" value="Cell-division inhibitor MinC, C-terminal domain"/>
    <property type="match status" value="1"/>
</dbReference>
<comment type="function">
    <text evidence="1">Cell division inhibitor that blocks the formation of polar Z ring septums. Rapidly oscillates between the poles of the cell to destabilize FtsZ filaments that have formed before they mature into polar Z rings. Prevents FtsZ polymerization.</text>
</comment>
<comment type="subunit">
    <text evidence="1">Interacts with MinD and FtsZ.</text>
</comment>
<comment type="similarity">
    <text evidence="1">Belongs to the MinC family.</text>
</comment>
<accession>Q71ZC5</accession>
<name>MINC_LISMF</name>
<evidence type="ECO:0000255" key="1">
    <source>
        <dbReference type="HAMAP-Rule" id="MF_00267"/>
    </source>
</evidence>
<proteinExistence type="inferred from homology"/>
<reference key="1">
    <citation type="journal article" date="2004" name="Nucleic Acids Res.">
        <title>Whole genome comparisons of serotype 4b and 1/2a strains of the food-borne pathogen Listeria monocytogenes reveal new insights into the core genome components of this species.</title>
        <authorList>
            <person name="Nelson K.E."/>
            <person name="Fouts D.E."/>
            <person name="Mongodin E.F."/>
            <person name="Ravel J."/>
            <person name="DeBoy R.T."/>
            <person name="Kolonay J.F."/>
            <person name="Rasko D.A."/>
            <person name="Angiuoli S.V."/>
            <person name="Gill S.R."/>
            <person name="Paulsen I.T."/>
            <person name="Peterson J.D."/>
            <person name="White O."/>
            <person name="Nelson W.C."/>
            <person name="Nierman W.C."/>
            <person name="Beanan M.J."/>
            <person name="Brinkac L.M."/>
            <person name="Daugherty S.C."/>
            <person name="Dodson R.J."/>
            <person name="Durkin A.S."/>
            <person name="Madupu R."/>
            <person name="Haft D.H."/>
            <person name="Selengut J."/>
            <person name="Van Aken S.E."/>
            <person name="Khouri H.M."/>
            <person name="Fedorova N."/>
            <person name="Forberger H.A."/>
            <person name="Tran B."/>
            <person name="Kathariou S."/>
            <person name="Wonderling L.D."/>
            <person name="Uhlich G.A."/>
            <person name="Bayles D.O."/>
            <person name="Luchansky J.B."/>
            <person name="Fraser C.M."/>
        </authorList>
    </citation>
    <scope>NUCLEOTIDE SEQUENCE [LARGE SCALE GENOMIC DNA]</scope>
    <source>
        <strain>F2365</strain>
    </source>
</reference>
<organism>
    <name type="scientific">Listeria monocytogenes serotype 4b (strain F2365)</name>
    <dbReference type="NCBI Taxonomy" id="265669"/>
    <lineage>
        <taxon>Bacteria</taxon>
        <taxon>Bacillati</taxon>
        <taxon>Bacillota</taxon>
        <taxon>Bacilli</taxon>
        <taxon>Bacillales</taxon>
        <taxon>Listeriaceae</taxon>
        <taxon>Listeria</taxon>
    </lineage>
</organism>